<reference key="1">
    <citation type="submission" date="2003-03" db="EMBL/GenBank/DDBJ databases">
        <title>African swine fever virus genomes.</title>
        <authorList>
            <person name="Kutish G.F."/>
            <person name="Rock D.L."/>
        </authorList>
    </citation>
    <scope>NUCLEOTIDE SEQUENCE [LARGE SCALE GENOMIC DNA]</scope>
</reference>
<proteinExistence type="inferred from homology"/>
<evidence type="ECO:0000255" key="1">
    <source>
        <dbReference type="PROSITE-ProRule" id="PRU00541"/>
    </source>
</evidence>
<evidence type="ECO:0000255" key="2">
    <source>
        <dbReference type="PROSITE-ProRule" id="PRU00542"/>
    </source>
</evidence>
<evidence type="ECO:0000305" key="3"/>
<gene>
    <name type="ordered locus">Mal-048</name>
</gene>
<sequence length="859" mass="98579">MYAGFYVAVHPWLETQSLHKVGHTGNLAARLHDGSYTTCFTDEWKYCFTLETPTKKDAQKIEAGVLYCAQFFRVKNKELLCLLPEKIKQLAEDVAKCLDISYTLCDSPTYEMNDSTIVVEPSLPSDPLISKEKLRHLVIIPVEDEDHFADDVLFFSTDETRTAIEDRLYQKEAANMGYQELQRSGRAILQMACRCGKTRVAYLILSNYLQGKVLYLVPGLSLLRQTLEKLYLYGISLKNVLLVGSDQTRIVLNHDNIEMTTNPVFIAKRIQEASSLLVIATYQSSTLLVDDFDLIISDECHRICGEWEIRPFTHVLLNFKKGHRLFLTATPRYDTPLSMKNRDLFGGVAFRYYLREGIEAGYVNDFELQMVAAPKLAHQLSNREETTKQIIVKQIIMALAYLKTNITSPKMLVFTRDIKQAKELYAELVDLGVYALIAHSTLPRQVILKTFTEFCSSKEPVILLNCRLFQEGVEVPELNAVFFAAPRHSPRDIIQSICRPLNKQVQKPHATIFLPLEVNTENVCLDKFSSIIPFADALASEDPRFYEHLLNPSEVAYPINWIGAHGSVSELLHLARHAIRYGTQGKIDRLTRSERLPWKAAFAELKRTVEICCRYPKINDGFHFGGATLRFDTWYKWVIKSYLQYKNKEPSSLEPYQVSDLESLQDWTTRGVGGPYPWEESMAFLETWLAQNKGELVAIDIHQGGWIGLDATPMERLSGVLTTVSQRDGRSYGKNKKLRPKKGFMIPPQQAEDLDRIFGKHNLKWRKDRVNGFLKEDEHGNYTGEPTCIQEAYRTFKEYVKTNPEYIEKYWPGYAKGKHKHQELPHIWESGLAPPRYKAFKDGNKQLIQRSPKKKDVKN</sequence>
<name>VF859_ASFM2</name>
<feature type="chain" id="PRO_0000355213" description="Probable helicase A859L">
    <location>
        <begin position="1"/>
        <end position="859"/>
    </location>
</feature>
<feature type="domain" description="Helicase ATP-binding" evidence="1">
    <location>
        <begin position="178"/>
        <end position="349"/>
    </location>
</feature>
<feature type="domain" description="Helicase C-terminal" evidence="2">
    <location>
        <begin position="394"/>
        <end position="553"/>
    </location>
</feature>
<feature type="short sequence motif" description="DEAH box">
    <location>
        <begin position="298"/>
        <end position="301"/>
    </location>
</feature>
<feature type="binding site" evidence="1">
    <location>
        <begin position="191"/>
        <end position="198"/>
    </location>
    <ligand>
        <name>ATP</name>
        <dbReference type="ChEBI" id="CHEBI:30616"/>
    </ligand>
</feature>
<organismHost>
    <name type="scientific">Ornithodoros</name>
    <name type="common">relapsing fever ticks</name>
    <dbReference type="NCBI Taxonomy" id="6937"/>
</organismHost>
<organismHost>
    <name type="scientific">Phacochoerus aethiopicus</name>
    <name type="common">Warthog</name>
    <dbReference type="NCBI Taxonomy" id="85517"/>
</organismHost>
<organismHost>
    <name type="scientific">Phacochoerus africanus</name>
    <name type="common">Warthog</name>
    <dbReference type="NCBI Taxonomy" id="41426"/>
</organismHost>
<organismHost>
    <name type="scientific">Potamochoerus larvatus</name>
    <name type="common">Bushpig</name>
    <dbReference type="NCBI Taxonomy" id="273792"/>
</organismHost>
<organismHost>
    <name type="scientific">Sus scrofa</name>
    <name type="common">Pig</name>
    <dbReference type="NCBI Taxonomy" id="9823"/>
</organismHost>
<dbReference type="EC" id="3.6.4.-"/>
<dbReference type="EMBL" id="AY261361">
    <property type="status" value="NOT_ANNOTATED_CDS"/>
    <property type="molecule type" value="Genomic_DNA"/>
</dbReference>
<dbReference type="SMR" id="P0C8H1"/>
<dbReference type="Proteomes" id="UP000000860">
    <property type="component" value="Segment"/>
</dbReference>
<dbReference type="GO" id="GO:0005524">
    <property type="term" value="F:ATP binding"/>
    <property type="evidence" value="ECO:0007669"/>
    <property type="project" value="UniProtKB-KW"/>
</dbReference>
<dbReference type="GO" id="GO:0003677">
    <property type="term" value="F:DNA binding"/>
    <property type="evidence" value="ECO:0007669"/>
    <property type="project" value="InterPro"/>
</dbReference>
<dbReference type="GO" id="GO:0004386">
    <property type="term" value="F:helicase activity"/>
    <property type="evidence" value="ECO:0007669"/>
    <property type="project" value="UniProtKB-KW"/>
</dbReference>
<dbReference type="GO" id="GO:0016787">
    <property type="term" value="F:hydrolase activity"/>
    <property type="evidence" value="ECO:0007669"/>
    <property type="project" value="UniProtKB-KW"/>
</dbReference>
<dbReference type="Gene3D" id="3.40.50.300">
    <property type="entry name" value="P-loop containing nucleotide triphosphate hydrolases"/>
    <property type="match status" value="2"/>
</dbReference>
<dbReference type="InterPro" id="IPR006935">
    <property type="entry name" value="Helicase/UvrB_N"/>
</dbReference>
<dbReference type="InterPro" id="IPR014001">
    <property type="entry name" value="Helicase_ATP-bd"/>
</dbReference>
<dbReference type="InterPro" id="IPR001650">
    <property type="entry name" value="Helicase_C-like"/>
</dbReference>
<dbReference type="InterPro" id="IPR050742">
    <property type="entry name" value="Helicase_Restrict-Modif_Enz"/>
</dbReference>
<dbReference type="InterPro" id="IPR027417">
    <property type="entry name" value="P-loop_NTPase"/>
</dbReference>
<dbReference type="InterPro" id="IPR018306">
    <property type="entry name" value="Phage_T5_Orf172_DNA-bd"/>
</dbReference>
<dbReference type="PANTHER" id="PTHR47396:SF1">
    <property type="entry name" value="ATP-DEPENDENT HELICASE IRC3-RELATED"/>
    <property type="match status" value="1"/>
</dbReference>
<dbReference type="PANTHER" id="PTHR47396">
    <property type="entry name" value="TYPE I RESTRICTION ENZYME ECOKI R PROTEIN"/>
    <property type="match status" value="1"/>
</dbReference>
<dbReference type="Pfam" id="PF00271">
    <property type="entry name" value="Helicase_C"/>
    <property type="match status" value="1"/>
</dbReference>
<dbReference type="Pfam" id="PF04851">
    <property type="entry name" value="ResIII"/>
    <property type="match status" value="1"/>
</dbReference>
<dbReference type="Pfam" id="PF10544">
    <property type="entry name" value="T5orf172"/>
    <property type="match status" value="1"/>
</dbReference>
<dbReference type="SMART" id="SM00487">
    <property type="entry name" value="DEXDc"/>
    <property type="match status" value="1"/>
</dbReference>
<dbReference type="SUPFAM" id="SSF52540">
    <property type="entry name" value="P-loop containing nucleoside triphosphate hydrolases"/>
    <property type="match status" value="1"/>
</dbReference>
<dbReference type="PROSITE" id="PS51192">
    <property type="entry name" value="HELICASE_ATP_BIND_1"/>
    <property type="match status" value="1"/>
</dbReference>
<dbReference type="PROSITE" id="PS51194">
    <property type="entry name" value="HELICASE_CTER"/>
    <property type="match status" value="1"/>
</dbReference>
<protein>
    <recommendedName>
        <fullName>Probable helicase A859L</fullName>
        <ecNumber>3.6.4.-</ecNumber>
    </recommendedName>
</protein>
<organism>
    <name type="scientific">African swine fever virus (isolate Tick/Malawi/Lil 20-1/1983)</name>
    <name type="common">ASFV</name>
    <dbReference type="NCBI Taxonomy" id="10500"/>
    <lineage>
        <taxon>Viruses</taxon>
        <taxon>Varidnaviria</taxon>
        <taxon>Bamfordvirae</taxon>
        <taxon>Nucleocytoviricota</taxon>
        <taxon>Pokkesviricetes</taxon>
        <taxon>Asfuvirales</taxon>
        <taxon>Asfarviridae</taxon>
        <taxon>Asfivirus</taxon>
        <taxon>African swine fever virus</taxon>
    </lineage>
</organism>
<keyword id="KW-0067">ATP-binding</keyword>
<keyword id="KW-0347">Helicase</keyword>
<keyword id="KW-0378">Hydrolase</keyword>
<keyword id="KW-0547">Nucleotide-binding</keyword>
<accession>P0C8H1</accession>
<comment type="similarity">
    <text evidence="3">Belongs to the asfivirus helicase A859L family.</text>
</comment>